<comment type="function">
    <text evidence="1">Component of the eukaryotic translation initiation factor 3 (eIF-3) complex, which is involved in protein synthesis of a specialized repertoire of mRNAs and, together with other initiation factors, stimulates binding of mRNA and methionyl-tRNAi to the 40S ribosome. The eIF-3 complex specifically targets and initiates translation of a subset of mRNAs involved in cell proliferation.</text>
</comment>
<comment type="subunit">
    <text evidence="1">Component of the eukaryotic translation initiation factor 3 (eIF-3) complex.</text>
</comment>
<comment type="subcellular location">
    <subcellularLocation>
        <location evidence="1">Cytoplasm</location>
    </subcellularLocation>
</comment>
<comment type="similarity">
    <text evidence="1">Belongs to the eIF-3 subunit L family.</text>
</comment>
<reference key="1">
    <citation type="journal article" date="2007" name="Science">
        <title>Sea anemone genome reveals ancestral eumetazoan gene repertoire and genomic organization.</title>
        <authorList>
            <person name="Putnam N.H."/>
            <person name="Srivastava M."/>
            <person name="Hellsten U."/>
            <person name="Dirks B."/>
            <person name="Chapman J."/>
            <person name="Salamov A."/>
            <person name="Terry A."/>
            <person name="Shapiro H."/>
            <person name="Lindquist E."/>
            <person name="Kapitonov V.V."/>
            <person name="Jurka J."/>
            <person name="Genikhovich G."/>
            <person name="Grigoriev I.V."/>
            <person name="Lucas S.M."/>
            <person name="Steele R.E."/>
            <person name="Finnerty J.R."/>
            <person name="Technau U."/>
            <person name="Martindale M.Q."/>
            <person name="Rokhsar D.S."/>
        </authorList>
    </citation>
    <scope>NUCLEOTIDE SEQUENCE [LARGE SCALE GENOMIC DNA]</scope>
    <source>
        <strain>CH2 X CH6</strain>
    </source>
</reference>
<sequence>MYTQADEYDGGDAGYEDDYSGYQGDGDDSVGSYNVPEEIKRFIHFFHQHVLEQNLYEIQSIYENGFNKLTDRYFNKTPWPEAEFIAPLVSGDQVFLILYKELYYRHIYNKLKPTVEQRFESYYNYCDLFNYILNTDEPVPLTLPNQWLWDIIDEFIYQFQAFSQFRSKLQNKPEDEIDVLRANSKIWNIHSVLNVLYSLVEKSRINYQLEMYNTNGNPDEVSGEFGIHPLYKMLGYFSLIGLLRLHSLLGDYFQAIKVLSNVELTRNTMYSRIPACQITTYYYVGFAYLMMRRYQDAIRCFSSVLLYIQRTKNMLQTKSYQYEEIMKKNDQMYNLLAIALTLCPQQLDENVHSQLREKCTEKMQKLQKGDLQMFEECFSYSCPKFVSPVPPNFDAPPANYNREPFNLQLKVFMNEVAQQSMIPVIRSYLKLYTTMPIAKLAAFLDMDEATFRNQLLCYKHKQRNLVWTKGTDGLDGEQQSSSEVDFYIDRDMIHIADTKVDRRYGEFFMRQIYKFDEMARNLQAL</sequence>
<gene>
    <name type="ORF">v1g169424</name>
</gene>
<keyword id="KW-0963">Cytoplasm</keyword>
<keyword id="KW-0396">Initiation factor</keyword>
<keyword id="KW-0648">Protein biosynthesis</keyword>
<keyword id="KW-1185">Reference proteome</keyword>
<protein>
    <recommendedName>
        <fullName evidence="1">Eukaryotic translation initiation factor 3 subunit L</fullName>
        <shortName evidence="1">eIF3l</shortName>
    </recommendedName>
</protein>
<evidence type="ECO:0000255" key="1">
    <source>
        <dbReference type="HAMAP-Rule" id="MF_03011"/>
    </source>
</evidence>
<evidence type="ECO:0000255" key="2">
    <source>
        <dbReference type="PROSITE-ProRule" id="PRU01185"/>
    </source>
</evidence>
<evidence type="ECO:0000256" key="3">
    <source>
        <dbReference type="SAM" id="MobiDB-lite"/>
    </source>
</evidence>
<name>EIF3L_NEMVE</name>
<proteinExistence type="inferred from homology"/>
<feature type="chain" id="PRO_0000364235" description="Eukaryotic translation initiation factor 3 subunit L">
    <location>
        <begin position="1"/>
        <end position="525"/>
    </location>
</feature>
<feature type="domain" description="PCI" evidence="2">
    <location>
        <begin position="296"/>
        <end position="502"/>
    </location>
</feature>
<feature type="region of interest" description="Disordered" evidence="3">
    <location>
        <begin position="1"/>
        <end position="21"/>
    </location>
</feature>
<feature type="compositionally biased region" description="Acidic residues" evidence="3">
    <location>
        <begin position="1"/>
        <end position="19"/>
    </location>
</feature>
<organism>
    <name type="scientific">Nematostella vectensis</name>
    <name type="common">Starlet sea anemone</name>
    <dbReference type="NCBI Taxonomy" id="45351"/>
    <lineage>
        <taxon>Eukaryota</taxon>
        <taxon>Metazoa</taxon>
        <taxon>Cnidaria</taxon>
        <taxon>Anthozoa</taxon>
        <taxon>Hexacorallia</taxon>
        <taxon>Actiniaria</taxon>
        <taxon>Edwardsiidae</taxon>
        <taxon>Nematostella</taxon>
    </lineage>
</organism>
<accession>A7SDW5</accession>
<dbReference type="EMBL" id="DS469633">
    <property type="protein sequence ID" value="EDO38083.1"/>
    <property type="molecule type" value="Genomic_DNA"/>
</dbReference>
<dbReference type="RefSeq" id="XP_001630146.1">
    <property type="nucleotide sequence ID" value="XM_001630096.1"/>
</dbReference>
<dbReference type="SMR" id="A7SDW5"/>
<dbReference type="FunCoup" id="A7SDW5">
    <property type="interactions" value="764"/>
</dbReference>
<dbReference type="STRING" id="45351.A7SDW5"/>
<dbReference type="EnsemblMetazoa" id="EDO38083">
    <property type="protein sequence ID" value="EDO38083"/>
    <property type="gene ID" value="NEMVEDRAFT_v1g169424"/>
</dbReference>
<dbReference type="eggNOG" id="KOG3677">
    <property type="taxonomic scope" value="Eukaryota"/>
</dbReference>
<dbReference type="HOGENOM" id="CLU_029210_0_1_1"/>
<dbReference type="InParanoid" id="A7SDW5"/>
<dbReference type="OMA" id="AGWFIRN"/>
<dbReference type="OrthoDB" id="15082at2759"/>
<dbReference type="PhylomeDB" id="A7SDW5"/>
<dbReference type="Proteomes" id="UP000001593">
    <property type="component" value="Unassembled WGS sequence"/>
</dbReference>
<dbReference type="GO" id="GO:0016282">
    <property type="term" value="C:eukaryotic 43S preinitiation complex"/>
    <property type="evidence" value="ECO:0007669"/>
    <property type="project" value="UniProtKB-UniRule"/>
</dbReference>
<dbReference type="GO" id="GO:0033290">
    <property type="term" value="C:eukaryotic 48S preinitiation complex"/>
    <property type="evidence" value="ECO:0007669"/>
    <property type="project" value="UniProtKB-UniRule"/>
</dbReference>
<dbReference type="GO" id="GO:0005852">
    <property type="term" value="C:eukaryotic translation initiation factor 3 complex"/>
    <property type="evidence" value="ECO:0000318"/>
    <property type="project" value="GO_Central"/>
</dbReference>
<dbReference type="GO" id="GO:0003743">
    <property type="term" value="F:translation initiation factor activity"/>
    <property type="evidence" value="ECO:0007669"/>
    <property type="project" value="UniProtKB-UniRule"/>
</dbReference>
<dbReference type="GO" id="GO:0001732">
    <property type="term" value="P:formation of cytoplasmic translation initiation complex"/>
    <property type="evidence" value="ECO:0007669"/>
    <property type="project" value="UniProtKB-UniRule"/>
</dbReference>
<dbReference type="GO" id="GO:0006413">
    <property type="term" value="P:translational initiation"/>
    <property type="evidence" value="ECO:0000318"/>
    <property type="project" value="GO_Central"/>
</dbReference>
<dbReference type="Gene3D" id="1.25.40.10">
    <property type="entry name" value="Tetratricopeptide repeat domain"/>
    <property type="match status" value="1"/>
</dbReference>
<dbReference type="HAMAP" id="MF_03011">
    <property type="entry name" value="eIF3l"/>
    <property type="match status" value="1"/>
</dbReference>
<dbReference type="InterPro" id="IPR019382">
    <property type="entry name" value="eIF3l"/>
</dbReference>
<dbReference type="InterPro" id="IPR000717">
    <property type="entry name" value="PCI_dom"/>
</dbReference>
<dbReference type="InterPro" id="IPR011990">
    <property type="entry name" value="TPR-like_helical_dom_sf"/>
</dbReference>
<dbReference type="PANTHER" id="PTHR13242">
    <property type="entry name" value="EUKARYOTIC TRANSLATION INITIATION FACTOR 3"/>
    <property type="match status" value="1"/>
</dbReference>
<dbReference type="PANTHER" id="PTHR13242:SF0">
    <property type="entry name" value="EUKARYOTIC TRANSLATION INITIATION FACTOR 3 SUBUNIT L"/>
    <property type="match status" value="1"/>
</dbReference>
<dbReference type="Pfam" id="PF10255">
    <property type="entry name" value="Paf67"/>
    <property type="match status" value="1"/>
</dbReference>
<dbReference type="SUPFAM" id="SSF48452">
    <property type="entry name" value="TPR-like"/>
    <property type="match status" value="1"/>
</dbReference>
<dbReference type="PROSITE" id="PS50250">
    <property type="entry name" value="PCI"/>
    <property type="match status" value="1"/>
</dbReference>